<name>CBPC1_XENLA</name>
<accession>Q6DD21</accession>
<sequence>MSKVKATAEKCQLNISRIQSLLSQLEKVNAESLLFDTDNTRYVTAKIFHLAQTQEKTRKEMTAKGSTGIEVILCTLENTRDLQTILNILNILNELASTAGGRRINALISKGGARILLQLLLSASKESPSNEELMIVLHSLLAKLGPKDKKFGVKARVSGALNISLNLVKQNLQNPRLILPCLQVLRVCCMNSVNSAYLGKNGAVEILFKIIGPFTRRNTGLIKVSLDTLAALLKSRTNARKAVDRAYVQTLISTYMDWHRHDTRHRHMLIRKGILQCLKSITNIKIGRKAFIDANGMKTLYNTSQECQAVRTLDPLVNTSSLIMRKCFPKNRLPLPTIKSAFQFQLPFMPTSGPVALLYSMPPEVDDVVDESDDNEDTDAETEAEAENEDSDQICKNDDIETDITKLIPGQELGRTLEDLKMYERFFPELTEDFQEFDLVSNEPKPGAKLGPIIVPTAGEEQPEVPNNFMKNLARRSCNISLEDESNQRPTFLDMSKNVTNKGNSLDQKVHVDKDGSCYYYSNDIVRDLEKLSLHKASGNHPCRNGCVSAKDKPNFLPHPCNKSTSSSISCSNSLFEKHSMHLGPLCCSGIAPDDDESSPLDEQVMREMTDFDSILPLHDPDLYIEIVKNTKSVPEYTEVAYPDYFGHVPPFFKERLLERPYGVQRSKIFQDIERMIHPNDIIDRVIYDLDNPSCSAHDEIDILKFNSKFESGNLRKVIQIRKNEYDLILNSDINSNHYHQWFYFEVSGMRTGVAYRFNIINCEKSNSQFNYGMQPLMYSVQEALASRPWWYRVGTDICYYKNHFSRSSLATGGQKGKSYYTITFTVTFPHKDDVCYFAYHYPYTYSTLKMHLQKLESLHSPQQIYFRQEVLCETLGGNGCPVITITAMPESNYYEHVYQFRNRPYIFLTSRVHPGETNASWVMKGTLEFLMGSSATAQSLRESYIFKIVPMLNPDGVINGNHRCSLSGEDLNRQWQNPNSDLHPTIYHTKGLLQYLSAIKRVPLVYCDYHGHSRKKNVFMYGCSIKETVWHTNANAASCDMVEESGYKTLPKVLNQIAPAFSMSSCSFVVEKSKESTARVVVWKEIGVQRSYTMESTLCGCDQGKYKDLQIGTKELEEMGAKFCVGLLRLKRLTSPMELTLPPSLIDIENELIESSCKVASPTTYVLEDDEPRFIEEVDYSAESNDDVDPDLPENIGDFETSTLEEESFSDSEITRTHMSGQST</sequence>
<gene>
    <name type="primary">agtpbp1</name>
    <name type="synonym">ccp1</name>
</gene>
<evidence type="ECO:0000250" key="1"/>
<evidence type="ECO:0000250" key="2">
    <source>
        <dbReference type="UniProtKB" id="Q641K1"/>
    </source>
</evidence>
<evidence type="ECO:0000250" key="3">
    <source>
        <dbReference type="UniProtKB" id="Q9UPW5"/>
    </source>
</evidence>
<evidence type="ECO:0000255" key="4">
    <source>
        <dbReference type="PROSITE-ProRule" id="PRU01379"/>
    </source>
</evidence>
<evidence type="ECO:0000256" key="5">
    <source>
        <dbReference type="SAM" id="MobiDB-lite"/>
    </source>
</evidence>
<evidence type="ECO:0000305" key="6"/>
<organism>
    <name type="scientific">Xenopus laevis</name>
    <name type="common">African clawed frog</name>
    <dbReference type="NCBI Taxonomy" id="8355"/>
    <lineage>
        <taxon>Eukaryota</taxon>
        <taxon>Metazoa</taxon>
        <taxon>Chordata</taxon>
        <taxon>Craniata</taxon>
        <taxon>Vertebrata</taxon>
        <taxon>Euteleostomi</taxon>
        <taxon>Amphibia</taxon>
        <taxon>Batrachia</taxon>
        <taxon>Anura</taxon>
        <taxon>Pipoidea</taxon>
        <taxon>Pipidae</taxon>
        <taxon>Xenopodinae</taxon>
        <taxon>Xenopus</taxon>
        <taxon>Xenopus</taxon>
    </lineage>
</organism>
<dbReference type="EC" id="3.4.17.-" evidence="2"/>
<dbReference type="EC" id="3.4.17.24" evidence="2"/>
<dbReference type="EMBL" id="BC077808">
    <property type="protein sequence ID" value="AAH77808.1"/>
    <property type="molecule type" value="mRNA"/>
</dbReference>
<dbReference type="RefSeq" id="NP_001087104.1">
    <property type="nucleotide sequence ID" value="NM_001093635.1"/>
</dbReference>
<dbReference type="SMR" id="Q6DD21"/>
<dbReference type="BioGRID" id="103853">
    <property type="interactions" value="1"/>
</dbReference>
<dbReference type="IntAct" id="Q6DD21">
    <property type="interactions" value="1"/>
</dbReference>
<dbReference type="DNASU" id="446993"/>
<dbReference type="GeneID" id="446993"/>
<dbReference type="KEGG" id="xla:446993"/>
<dbReference type="AGR" id="Xenbase:XB-GENE-5932611"/>
<dbReference type="CTD" id="446993"/>
<dbReference type="Xenbase" id="XB-GENE-5932611">
    <property type="gene designation" value="agtpbp1.L"/>
</dbReference>
<dbReference type="OMA" id="LEYNMPS"/>
<dbReference type="OrthoDB" id="10253041at2759"/>
<dbReference type="Proteomes" id="UP000186698">
    <property type="component" value="Chromosome 1L"/>
</dbReference>
<dbReference type="Bgee" id="446993">
    <property type="expression patterns" value="Expressed in lung and 19 other cell types or tissues"/>
</dbReference>
<dbReference type="GO" id="GO:0005737">
    <property type="term" value="C:cytoplasm"/>
    <property type="evidence" value="ECO:0000250"/>
    <property type="project" value="UniProtKB"/>
</dbReference>
<dbReference type="GO" id="GO:0005829">
    <property type="term" value="C:cytosol"/>
    <property type="evidence" value="ECO:0000250"/>
    <property type="project" value="UniProtKB"/>
</dbReference>
<dbReference type="GO" id="GO:0015630">
    <property type="term" value="C:microtubule cytoskeleton"/>
    <property type="evidence" value="ECO:0000318"/>
    <property type="project" value="GO_Central"/>
</dbReference>
<dbReference type="GO" id="GO:0005739">
    <property type="term" value="C:mitochondrion"/>
    <property type="evidence" value="ECO:0000250"/>
    <property type="project" value="UniProtKB"/>
</dbReference>
<dbReference type="GO" id="GO:0005634">
    <property type="term" value="C:nucleus"/>
    <property type="evidence" value="ECO:0000250"/>
    <property type="project" value="UniProtKB"/>
</dbReference>
<dbReference type="GO" id="GO:0004181">
    <property type="term" value="F:metallocarboxypeptidase activity"/>
    <property type="evidence" value="ECO:0000250"/>
    <property type="project" value="UniProtKB"/>
</dbReference>
<dbReference type="GO" id="GO:0015631">
    <property type="term" value="F:tubulin binding"/>
    <property type="evidence" value="ECO:0000250"/>
    <property type="project" value="UniProtKB"/>
</dbReference>
<dbReference type="GO" id="GO:0008270">
    <property type="term" value="F:zinc ion binding"/>
    <property type="evidence" value="ECO:0007669"/>
    <property type="project" value="InterPro"/>
</dbReference>
<dbReference type="GO" id="GO:0035609">
    <property type="term" value="P:C-terminal protein deglutamylation"/>
    <property type="evidence" value="ECO:0000250"/>
    <property type="project" value="UniProtKB"/>
</dbReference>
<dbReference type="GO" id="GO:0021702">
    <property type="term" value="P:cerebellar Purkinje cell differentiation"/>
    <property type="evidence" value="ECO:0000250"/>
    <property type="project" value="UniProtKB"/>
</dbReference>
<dbReference type="GO" id="GO:0001754">
    <property type="term" value="P:eye photoreceptor cell differentiation"/>
    <property type="evidence" value="ECO:0000250"/>
    <property type="project" value="UniProtKB"/>
</dbReference>
<dbReference type="GO" id="GO:0007005">
    <property type="term" value="P:mitochondrion organization"/>
    <property type="evidence" value="ECO:0000250"/>
    <property type="project" value="UniProtKB"/>
</dbReference>
<dbReference type="GO" id="GO:0050905">
    <property type="term" value="P:neuromuscular process"/>
    <property type="evidence" value="ECO:0000250"/>
    <property type="project" value="UniProtKB"/>
</dbReference>
<dbReference type="GO" id="GO:0021772">
    <property type="term" value="P:olfactory bulb development"/>
    <property type="evidence" value="ECO:0000250"/>
    <property type="project" value="UniProtKB"/>
</dbReference>
<dbReference type="GO" id="GO:0035610">
    <property type="term" value="P:protein side chain deglutamylation"/>
    <property type="evidence" value="ECO:0000250"/>
    <property type="project" value="UniProtKB"/>
</dbReference>
<dbReference type="GO" id="GO:0006508">
    <property type="term" value="P:proteolysis"/>
    <property type="evidence" value="ECO:0007669"/>
    <property type="project" value="UniProtKB-KW"/>
</dbReference>
<dbReference type="CDD" id="cd06906">
    <property type="entry name" value="M14_Nna1"/>
    <property type="match status" value="1"/>
</dbReference>
<dbReference type="FunFam" id="3.40.630.10:FF:000024">
    <property type="entry name" value="ATP/GTP binding protein 1"/>
    <property type="match status" value="1"/>
</dbReference>
<dbReference type="FunFam" id="1.25.10.10:FF:000125">
    <property type="entry name" value="cytosolic carboxypeptidase 1 isoform X1"/>
    <property type="match status" value="1"/>
</dbReference>
<dbReference type="FunFam" id="2.60.40.3120:FF:000001">
    <property type="entry name" value="cytosolic carboxypeptidase 1 isoform X1"/>
    <property type="match status" value="1"/>
</dbReference>
<dbReference type="Gene3D" id="2.60.40.3120">
    <property type="match status" value="1"/>
</dbReference>
<dbReference type="Gene3D" id="1.25.10.10">
    <property type="entry name" value="Leucine-rich Repeat Variant"/>
    <property type="match status" value="1"/>
</dbReference>
<dbReference type="Gene3D" id="3.40.630.10">
    <property type="entry name" value="Zn peptidases"/>
    <property type="match status" value="1"/>
</dbReference>
<dbReference type="InterPro" id="IPR011989">
    <property type="entry name" value="ARM-like"/>
</dbReference>
<dbReference type="InterPro" id="IPR016024">
    <property type="entry name" value="ARM-type_fold"/>
</dbReference>
<dbReference type="InterPro" id="IPR033852">
    <property type="entry name" value="CBPC1/4"/>
</dbReference>
<dbReference type="InterPro" id="IPR050821">
    <property type="entry name" value="Cytosolic_carboxypeptidase"/>
</dbReference>
<dbReference type="InterPro" id="IPR040626">
    <property type="entry name" value="Pepdidase_M14_N"/>
</dbReference>
<dbReference type="InterPro" id="IPR000834">
    <property type="entry name" value="Peptidase_M14"/>
</dbReference>
<dbReference type="PANTHER" id="PTHR12756">
    <property type="entry name" value="CYTOSOLIC CARBOXYPEPTIDASE"/>
    <property type="match status" value="1"/>
</dbReference>
<dbReference type="PANTHER" id="PTHR12756:SF24">
    <property type="entry name" value="CYTOSOLIC CARBOXYPEPTIDASE 1"/>
    <property type="match status" value="1"/>
</dbReference>
<dbReference type="Pfam" id="PF18027">
    <property type="entry name" value="Pepdidase_M14_N"/>
    <property type="match status" value="1"/>
</dbReference>
<dbReference type="Pfam" id="PF00246">
    <property type="entry name" value="Peptidase_M14"/>
    <property type="match status" value="1"/>
</dbReference>
<dbReference type="SUPFAM" id="SSF48371">
    <property type="entry name" value="ARM repeat"/>
    <property type="match status" value="1"/>
</dbReference>
<dbReference type="SUPFAM" id="SSF53187">
    <property type="entry name" value="Zn-dependent exopeptidases"/>
    <property type="match status" value="1"/>
</dbReference>
<dbReference type="PROSITE" id="PS52035">
    <property type="entry name" value="PEPTIDASE_M14"/>
    <property type="match status" value="1"/>
</dbReference>
<feature type="chain" id="PRO_0000308693" description="Cytosolic carboxypeptidase 1">
    <location>
        <begin position="1"/>
        <end position="1225"/>
    </location>
</feature>
<feature type="domain" description="Peptidase M14" evidence="4">
    <location>
        <begin position="842"/>
        <end position="1132"/>
    </location>
</feature>
<feature type="region of interest" description="Disordered" evidence="5">
    <location>
        <begin position="366"/>
        <end position="398"/>
    </location>
</feature>
<feature type="region of interest" description="Disordered" evidence="5">
    <location>
        <begin position="1181"/>
        <end position="1225"/>
    </location>
</feature>
<feature type="compositionally biased region" description="Acidic residues" evidence="5">
    <location>
        <begin position="366"/>
        <end position="392"/>
    </location>
</feature>
<feature type="compositionally biased region" description="Acidic residues" evidence="5">
    <location>
        <begin position="1181"/>
        <end position="1193"/>
    </location>
</feature>
<feature type="active site" description="Proton donor/acceptor" evidence="4">
    <location>
        <position position="1096"/>
    </location>
</feature>
<feature type="binding site" evidence="4">
    <location>
        <position position="914"/>
    </location>
    <ligand>
        <name>Zn(2+)</name>
        <dbReference type="ChEBI" id="CHEBI:29105"/>
        <note>catalytic</note>
    </ligand>
</feature>
<feature type="binding site" evidence="4">
    <location>
        <position position="917"/>
    </location>
    <ligand>
        <name>Zn(2+)</name>
        <dbReference type="ChEBI" id="CHEBI:29105"/>
        <note>catalytic</note>
    </ligand>
</feature>
<feature type="binding site" evidence="4">
    <location>
        <position position="1011"/>
    </location>
    <ligand>
        <name>Zn(2+)</name>
        <dbReference type="ChEBI" id="CHEBI:29105"/>
        <note>catalytic</note>
    </ligand>
</feature>
<reference key="1">
    <citation type="submission" date="2004-07" db="EMBL/GenBank/DDBJ databases">
        <authorList>
            <consortium name="NIH - Xenopus Gene Collection (XGC) project"/>
        </authorList>
    </citation>
    <scope>NUCLEOTIDE SEQUENCE [LARGE SCALE MRNA]</scope>
    <source>
        <tissue>Embryo</tissue>
    </source>
</reference>
<comment type="function">
    <text evidence="2">Metallocarboxypeptidase that mediates protein deglutamylation of tubulin and non-tubulin target proteins. Catalyzes the removal of polyglutamate side chains present on the gamma-carboxyl group of glutamate residues within the C-terminal tail of alpha- and beta-tubulin. Specifically cleaves tubulin long-side-chains, while it is not able to remove the branching point glutamate. Also catalyzes the removal of polyglutamate residues from the carboxy-terminus of alpha-tubulin as well as non-tubulin proteins.</text>
</comment>
<comment type="catalytic activity">
    <reaction evidence="2">
        <text>(L-glutamyl)(n+1)-gamma-L-glutamyl-L-glutamyl-[protein] + H2O = (L-glutamyl)(n)-gamma-L-glutamyl-L-glutamyl-[protein] + L-glutamate</text>
        <dbReference type="Rhea" id="RHEA:60004"/>
        <dbReference type="Rhea" id="RHEA-COMP:15519"/>
        <dbReference type="Rhea" id="RHEA-COMP:15675"/>
        <dbReference type="ChEBI" id="CHEBI:15377"/>
        <dbReference type="ChEBI" id="CHEBI:29985"/>
        <dbReference type="ChEBI" id="CHEBI:143623"/>
    </reaction>
    <physiologicalReaction direction="left-to-right" evidence="2">
        <dbReference type="Rhea" id="RHEA:60005"/>
    </physiologicalReaction>
</comment>
<comment type="catalytic activity">
    <reaction evidence="2">
        <text>C-terminal L-alpha-aminoacyl-L-glutamyl-L-glutamyl-[tubulin] + H2O = C-terminal L-alpha-aminoacyl-L-glutamyl-[tubulin] + L-glutamate</text>
        <dbReference type="Rhea" id="RHEA:63792"/>
        <dbReference type="Rhea" id="RHEA-COMP:16435"/>
        <dbReference type="Rhea" id="RHEA-COMP:16436"/>
        <dbReference type="ChEBI" id="CHEBI:15377"/>
        <dbReference type="ChEBI" id="CHEBI:29985"/>
        <dbReference type="ChEBI" id="CHEBI:149555"/>
        <dbReference type="ChEBI" id="CHEBI:149556"/>
        <dbReference type="EC" id="3.4.17.24"/>
    </reaction>
    <physiologicalReaction direction="left-to-right" evidence="2">
        <dbReference type="Rhea" id="RHEA:63793"/>
    </physiologicalReaction>
</comment>
<comment type="cofactor">
    <cofactor evidence="1">
        <name>Zn(2+)</name>
        <dbReference type="ChEBI" id="CHEBI:29105"/>
    </cofactor>
    <text evidence="1">Binds 1 zinc ion per subunit.</text>
</comment>
<comment type="subcellular location">
    <subcellularLocation>
        <location evidence="3">Cytoplasm</location>
    </subcellularLocation>
    <subcellularLocation>
        <location evidence="2">Cytoplasm</location>
        <location evidence="2">Cytosol</location>
    </subcellularLocation>
    <subcellularLocation>
        <location evidence="2">Nucleus</location>
    </subcellularLocation>
    <subcellularLocation>
        <location evidence="2">Mitochondrion</location>
    </subcellularLocation>
</comment>
<comment type="similarity">
    <text evidence="6">Belongs to the peptidase M14 family.</text>
</comment>
<protein>
    <recommendedName>
        <fullName evidence="2">Cytosolic carboxypeptidase 1</fullName>
        <ecNumber evidence="2">3.4.17.-</ecNumber>
        <ecNumber evidence="2">3.4.17.24</ecNumber>
    </recommendedName>
    <alternativeName>
        <fullName evidence="2">ATP/GTP-binding protein 1</fullName>
    </alternativeName>
    <alternativeName>
        <fullName evidence="6">Protein deglutamylase CCP1</fullName>
    </alternativeName>
</protein>
<keyword id="KW-0121">Carboxypeptidase</keyword>
<keyword id="KW-0963">Cytoplasm</keyword>
<keyword id="KW-0378">Hydrolase</keyword>
<keyword id="KW-0479">Metal-binding</keyword>
<keyword id="KW-0482">Metalloprotease</keyword>
<keyword id="KW-0496">Mitochondrion</keyword>
<keyword id="KW-0539">Nucleus</keyword>
<keyword id="KW-0645">Protease</keyword>
<keyword id="KW-1185">Reference proteome</keyword>
<keyword id="KW-0862">Zinc</keyword>
<proteinExistence type="evidence at transcript level"/>